<evidence type="ECO:0000255" key="1">
    <source>
        <dbReference type="HAMAP-Rule" id="MF_00385"/>
    </source>
</evidence>
<evidence type="ECO:0000305" key="2"/>
<dbReference type="EMBL" id="CP000813">
    <property type="protein sequence ID" value="ABV62180.1"/>
    <property type="molecule type" value="Genomic_DNA"/>
</dbReference>
<dbReference type="RefSeq" id="WP_003212139.1">
    <property type="nucleotide sequence ID" value="NZ_VEIS01000003.1"/>
</dbReference>
<dbReference type="SMR" id="A8FD63"/>
<dbReference type="STRING" id="315750.BPUM_1497"/>
<dbReference type="GeneID" id="5620760"/>
<dbReference type="KEGG" id="bpu:BPUM_1497"/>
<dbReference type="eggNOG" id="COG0228">
    <property type="taxonomic scope" value="Bacteria"/>
</dbReference>
<dbReference type="HOGENOM" id="CLU_100590_5_0_9"/>
<dbReference type="OrthoDB" id="9807878at2"/>
<dbReference type="Proteomes" id="UP000001355">
    <property type="component" value="Chromosome"/>
</dbReference>
<dbReference type="GO" id="GO:0005737">
    <property type="term" value="C:cytoplasm"/>
    <property type="evidence" value="ECO:0007669"/>
    <property type="project" value="UniProtKB-ARBA"/>
</dbReference>
<dbReference type="GO" id="GO:0015935">
    <property type="term" value="C:small ribosomal subunit"/>
    <property type="evidence" value="ECO:0007669"/>
    <property type="project" value="TreeGrafter"/>
</dbReference>
<dbReference type="GO" id="GO:0003735">
    <property type="term" value="F:structural constituent of ribosome"/>
    <property type="evidence" value="ECO:0007669"/>
    <property type="project" value="InterPro"/>
</dbReference>
<dbReference type="GO" id="GO:0006412">
    <property type="term" value="P:translation"/>
    <property type="evidence" value="ECO:0007669"/>
    <property type="project" value="UniProtKB-UniRule"/>
</dbReference>
<dbReference type="FunFam" id="3.30.1320.10:FF:000002">
    <property type="entry name" value="30S ribosomal protein S16"/>
    <property type="match status" value="1"/>
</dbReference>
<dbReference type="Gene3D" id="3.30.1320.10">
    <property type="match status" value="1"/>
</dbReference>
<dbReference type="HAMAP" id="MF_00385">
    <property type="entry name" value="Ribosomal_bS16"/>
    <property type="match status" value="1"/>
</dbReference>
<dbReference type="InterPro" id="IPR000307">
    <property type="entry name" value="Ribosomal_bS16"/>
</dbReference>
<dbReference type="InterPro" id="IPR023803">
    <property type="entry name" value="Ribosomal_bS16_dom_sf"/>
</dbReference>
<dbReference type="NCBIfam" id="TIGR00002">
    <property type="entry name" value="S16"/>
    <property type="match status" value="1"/>
</dbReference>
<dbReference type="PANTHER" id="PTHR12919">
    <property type="entry name" value="30S RIBOSOMAL PROTEIN S16"/>
    <property type="match status" value="1"/>
</dbReference>
<dbReference type="PANTHER" id="PTHR12919:SF20">
    <property type="entry name" value="SMALL RIBOSOMAL SUBUNIT PROTEIN BS16M"/>
    <property type="match status" value="1"/>
</dbReference>
<dbReference type="Pfam" id="PF00886">
    <property type="entry name" value="Ribosomal_S16"/>
    <property type="match status" value="1"/>
</dbReference>
<dbReference type="SUPFAM" id="SSF54565">
    <property type="entry name" value="Ribosomal protein S16"/>
    <property type="match status" value="1"/>
</dbReference>
<organism>
    <name type="scientific">Bacillus pumilus (strain SAFR-032)</name>
    <dbReference type="NCBI Taxonomy" id="315750"/>
    <lineage>
        <taxon>Bacteria</taxon>
        <taxon>Bacillati</taxon>
        <taxon>Bacillota</taxon>
        <taxon>Bacilli</taxon>
        <taxon>Bacillales</taxon>
        <taxon>Bacillaceae</taxon>
        <taxon>Bacillus</taxon>
    </lineage>
</organism>
<sequence>MAVKIRLKRMGSKRSPFYRIVVADSRSPRDGRFIETVGTYNPVLSPAEVKINEELALKWLQNGAKPSDTVRNLFSSQGILEKFHNAKNSK</sequence>
<gene>
    <name evidence="1" type="primary">rpsP</name>
    <name type="ordered locus">BPUM_1497</name>
</gene>
<accession>A8FD63</accession>
<keyword id="KW-0687">Ribonucleoprotein</keyword>
<keyword id="KW-0689">Ribosomal protein</keyword>
<protein>
    <recommendedName>
        <fullName evidence="1">Small ribosomal subunit protein bS16</fullName>
    </recommendedName>
    <alternativeName>
        <fullName evidence="2">30S ribosomal protein S16</fullName>
    </alternativeName>
</protein>
<reference key="1">
    <citation type="journal article" date="2007" name="PLoS ONE">
        <title>Paradoxical DNA repair and peroxide resistance gene conservation in Bacillus pumilus SAFR-032.</title>
        <authorList>
            <person name="Gioia J."/>
            <person name="Yerrapragada S."/>
            <person name="Qin X."/>
            <person name="Jiang H."/>
            <person name="Igboeli O.C."/>
            <person name="Muzny D."/>
            <person name="Dugan-Rocha S."/>
            <person name="Ding Y."/>
            <person name="Hawes A."/>
            <person name="Liu W."/>
            <person name="Perez L."/>
            <person name="Kovar C."/>
            <person name="Dinh H."/>
            <person name="Lee S."/>
            <person name="Nazareth L."/>
            <person name="Blyth P."/>
            <person name="Holder M."/>
            <person name="Buhay C."/>
            <person name="Tirumalai M.R."/>
            <person name="Liu Y."/>
            <person name="Dasgupta I."/>
            <person name="Bokhetache L."/>
            <person name="Fujita M."/>
            <person name="Karouia F."/>
            <person name="Eswara Moorthy P."/>
            <person name="Siefert J."/>
            <person name="Uzman A."/>
            <person name="Buzumbo P."/>
            <person name="Verma A."/>
            <person name="Zwiya H."/>
            <person name="McWilliams B.D."/>
            <person name="Olowu A."/>
            <person name="Clinkenbeard K.D."/>
            <person name="Newcombe D."/>
            <person name="Golebiewski L."/>
            <person name="Petrosino J.F."/>
            <person name="Nicholson W.L."/>
            <person name="Fox G.E."/>
            <person name="Venkateswaran K."/>
            <person name="Highlander S.K."/>
            <person name="Weinstock G.M."/>
        </authorList>
    </citation>
    <scope>NUCLEOTIDE SEQUENCE [LARGE SCALE GENOMIC DNA]</scope>
    <source>
        <strain>SAFR-032</strain>
    </source>
</reference>
<proteinExistence type="inferred from homology"/>
<feature type="chain" id="PRO_1000060707" description="Small ribosomal subunit protein bS16">
    <location>
        <begin position="1"/>
        <end position="90"/>
    </location>
</feature>
<comment type="similarity">
    <text evidence="1">Belongs to the bacterial ribosomal protein bS16 family.</text>
</comment>
<name>RS16_BACP2</name>